<evidence type="ECO:0000255" key="1">
    <source>
        <dbReference type="HAMAP-Rule" id="MF_01886"/>
    </source>
</evidence>
<evidence type="ECO:0000305" key="2">
    <source>
    </source>
</evidence>
<evidence type="ECO:0000312" key="3">
    <source>
        <dbReference type="EMBL" id="AAK43310.1"/>
    </source>
</evidence>
<organism>
    <name type="scientific">Saccharolobus solfataricus (strain ATCC 35092 / DSM 1617 / JCM 11322 / P2)</name>
    <name type="common">Sulfolobus solfataricus</name>
    <dbReference type="NCBI Taxonomy" id="273057"/>
    <lineage>
        <taxon>Archaea</taxon>
        <taxon>Thermoproteota</taxon>
        <taxon>Thermoprotei</taxon>
        <taxon>Sulfolobales</taxon>
        <taxon>Sulfolobaceae</taxon>
        <taxon>Saccharolobus</taxon>
    </lineage>
</organism>
<comment type="function">
    <text evidence="1 2">Catalyzes the formation of N(4)-acetylcytidine (ac(4)C) at the wobble position of tRNA(Met), by using acetyl-CoA as an acetyl donor and ATP (or GTP).</text>
</comment>
<comment type="function">
    <text evidence="2">Catalyzes the formation of 41 N(4)-acetylcytidine (ac(4)C) sites in RNA, almost always on the middle C of a CCG motif. Modifications are found mostly in tRNA, with small amounts found in rRNA and mRNA.</text>
</comment>
<comment type="catalytic activity">
    <reaction evidence="1 2">
        <text>cytidine(34) in elongator tRNA(Met) + acetyl-CoA + ATP + H2O = N(4)-acetylcytidine(34) in elongator tRNA(Met) + ADP + phosphate + CoA + H(+)</text>
        <dbReference type="Rhea" id="RHEA:43788"/>
        <dbReference type="Rhea" id="RHEA-COMP:10693"/>
        <dbReference type="Rhea" id="RHEA-COMP:10694"/>
        <dbReference type="ChEBI" id="CHEBI:15377"/>
        <dbReference type="ChEBI" id="CHEBI:15378"/>
        <dbReference type="ChEBI" id="CHEBI:30616"/>
        <dbReference type="ChEBI" id="CHEBI:43474"/>
        <dbReference type="ChEBI" id="CHEBI:57287"/>
        <dbReference type="ChEBI" id="CHEBI:57288"/>
        <dbReference type="ChEBI" id="CHEBI:74900"/>
        <dbReference type="ChEBI" id="CHEBI:82748"/>
        <dbReference type="ChEBI" id="CHEBI:456216"/>
        <dbReference type="EC" id="2.3.1.193"/>
    </reaction>
</comment>
<comment type="catalytic activity">
    <reaction evidence="2">
        <text>a cytidine in RNA + acetyl-CoA + ATP + H2O = an N(4)-acetylcytidine in RNA + ADP + phosphate + CoA + H(+)</text>
        <dbReference type="Rhea" id="RHEA:82211"/>
        <dbReference type="Rhea" id="RHEA-COMP:15704"/>
        <dbReference type="Rhea" id="RHEA-COMP:19834"/>
        <dbReference type="ChEBI" id="CHEBI:15377"/>
        <dbReference type="ChEBI" id="CHEBI:15378"/>
        <dbReference type="ChEBI" id="CHEBI:30616"/>
        <dbReference type="ChEBI" id="CHEBI:43474"/>
        <dbReference type="ChEBI" id="CHEBI:57287"/>
        <dbReference type="ChEBI" id="CHEBI:57288"/>
        <dbReference type="ChEBI" id="CHEBI:74900"/>
        <dbReference type="ChEBI" id="CHEBI:82748"/>
        <dbReference type="ChEBI" id="CHEBI:456216"/>
    </reaction>
</comment>
<comment type="catalytic activity">
    <reaction evidence="2">
        <text>a cytidine in tRNA + acetyl-CoA + ATP + H2O = an N(4)-acetylcytidine in tRNA + ADP + phosphate + CoA + H(+)</text>
        <dbReference type="Rhea" id="RHEA:53876"/>
        <dbReference type="Rhea" id="RHEA-COMP:13670"/>
        <dbReference type="Rhea" id="RHEA-COMP:13671"/>
        <dbReference type="ChEBI" id="CHEBI:15377"/>
        <dbReference type="ChEBI" id="CHEBI:15378"/>
        <dbReference type="ChEBI" id="CHEBI:30616"/>
        <dbReference type="ChEBI" id="CHEBI:43474"/>
        <dbReference type="ChEBI" id="CHEBI:57287"/>
        <dbReference type="ChEBI" id="CHEBI:57288"/>
        <dbReference type="ChEBI" id="CHEBI:74900"/>
        <dbReference type="ChEBI" id="CHEBI:82748"/>
        <dbReference type="ChEBI" id="CHEBI:456216"/>
    </reaction>
</comment>
<comment type="catalytic activity">
    <reaction evidence="2">
        <text>a cytidine in mRNA + acetyl-CoA + ATP + H2O = an N(4)-acetylcytidine in mRNA + ADP + phosphate + CoA + H(+)</text>
        <dbReference type="Rhea" id="RHEA:58480"/>
        <dbReference type="Rhea" id="RHEA-COMP:15145"/>
        <dbReference type="Rhea" id="RHEA-COMP:15146"/>
        <dbReference type="ChEBI" id="CHEBI:15377"/>
        <dbReference type="ChEBI" id="CHEBI:15378"/>
        <dbReference type="ChEBI" id="CHEBI:30616"/>
        <dbReference type="ChEBI" id="CHEBI:43474"/>
        <dbReference type="ChEBI" id="CHEBI:57287"/>
        <dbReference type="ChEBI" id="CHEBI:57288"/>
        <dbReference type="ChEBI" id="CHEBI:74900"/>
        <dbReference type="ChEBI" id="CHEBI:82748"/>
        <dbReference type="ChEBI" id="CHEBI:456216"/>
    </reaction>
</comment>
<comment type="subcellular location">
    <subcellularLocation>
        <location evidence="1">Cytoplasm</location>
    </subcellularLocation>
</comment>
<comment type="similarity">
    <text evidence="1">Belongs to the TmcA family.</text>
</comment>
<reference key="1">
    <citation type="journal article" date="2001" name="Proc. Natl. Acad. Sci. U.S.A.">
        <title>The complete genome of the crenarchaeon Sulfolobus solfataricus P2.</title>
        <authorList>
            <person name="She Q."/>
            <person name="Singh R.K."/>
            <person name="Confalonieri F."/>
            <person name="Zivanovic Y."/>
            <person name="Allard G."/>
            <person name="Awayez M.J."/>
            <person name="Chan-Weiher C.C.-Y."/>
            <person name="Clausen I.G."/>
            <person name="Curtis B.A."/>
            <person name="De Moors A."/>
            <person name="Erauso G."/>
            <person name="Fletcher C."/>
            <person name="Gordon P.M.K."/>
            <person name="Heikamp-de Jong I."/>
            <person name="Jeffries A.C."/>
            <person name="Kozera C.J."/>
            <person name="Medina N."/>
            <person name="Peng X."/>
            <person name="Thi-Ngoc H.P."/>
            <person name="Redder P."/>
            <person name="Schenk M.E."/>
            <person name="Theriault C."/>
            <person name="Tolstrup N."/>
            <person name="Charlebois R.L."/>
            <person name="Doolittle W.F."/>
            <person name="Duguet M."/>
            <person name="Gaasterland T."/>
            <person name="Garrett R.A."/>
            <person name="Ragan M.A."/>
            <person name="Sensen C.W."/>
            <person name="Van der Oost J."/>
        </authorList>
    </citation>
    <scope>NUCLEOTIDE SEQUENCE [LARGE SCALE GENOMIC DNA]</scope>
    <source>
        <strain>ATCC 35092 / DSM 1617 / JCM 11322 / P2</strain>
    </source>
</reference>
<reference key="2">
    <citation type="journal article" date="2020" name="Nature">
        <title>Dynamic RNA acetylation revealed by quantitative cross-evolutionary mapping.</title>
        <authorList>
            <person name="Sas-Chen A."/>
            <person name="Thomas J.M."/>
            <person name="Matzov D."/>
            <person name="Taoka M."/>
            <person name="Nance K.D."/>
            <person name="Nir R."/>
            <person name="Bryson K.M."/>
            <person name="Shachar R."/>
            <person name="Liman G.L.S."/>
            <person name="Burkhart B.W."/>
            <person name="Gamage S.T."/>
            <person name="Nobe Y."/>
            <person name="Briney C.A."/>
            <person name="Levy M.J."/>
            <person name="Fuchs R.T."/>
            <person name="Robb G.B."/>
            <person name="Hartmann J."/>
            <person name="Sharma S."/>
            <person name="Lin Q."/>
            <person name="Florens L."/>
            <person name="Washburn M.P."/>
            <person name="Isobe T."/>
            <person name="Santangelo T.J."/>
            <person name="Shalev-Benami M."/>
            <person name="Meier J.L."/>
            <person name="Schwartz S."/>
        </authorList>
    </citation>
    <scope>FUNCTION</scope>
    <source>
        <strain>ATCC 35092 / DSM 1617 / JCM 11322 / P2</strain>
    </source>
</reference>
<proteinExistence type="inferred from homology"/>
<accession>Q97U12</accession>
<keyword id="KW-0012">Acyltransferase</keyword>
<keyword id="KW-0067">ATP-binding</keyword>
<keyword id="KW-0963">Cytoplasm</keyword>
<keyword id="KW-0547">Nucleotide-binding</keyword>
<keyword id="KW-1185">Reference proteome</keyword>
<keyword id="KW-0694">RNA-binding</keyword>
<keyword id="KW-0698">rRNA processing</keyword>
<keyword id="KW-0699">rRNA-binding</keyword>
<keyword id="KW-0808">Transferase</keyword>
<keyword id="KW-0819">tRNA processing</keyword>
<keyword id="KW-0820">tRNA-binding</keyword>
<protein>
    <recommendedName>
        <fullName evidence="1">tRNA(Met) cytidine acetyltransferase TmcA 2</fullName>
        <ecNumber evidence="1 2">2.3.1.193</ecNumber>
    </recommendedName>
</protein>
<sequence length="770" mass="87983">MVNKEQFYDQIRKALEDGNTRYYRNLIYIERDDYFDHVKEIISLFLNFKSNPSVAYGFVPWASGSKERMRTIKEYFSKFDDIDYANAEYYLGNTYDLVILDTVDNFQPINIGRLVDLARGGGLIIIYTNNLIKDKTFRTSIMRNGLILDEYEKRFKRKLYEHEGIFIIDVNEYIPKPFSGNTMPKAEKKVPRNPLMPKEIHELSLSEDQNRVIESFTYLLSGGQRALVLTAARGRGKSAATGLSIAGLIEKLRERKEKSIRIIVTAPSIASASQVMSFAKLGLEALGEELSVKVSDTGHIKSLRGDYFKLEYVPPDAAIEDEGELLIIDEAAALGINYIDLALRAWKKVALVTTVHGYEGSNKAFLRYLRRLIESKRIRVKWVNMEQPLRYAKGDPIEKWLYDALLLDAEPSEPQYLNDTMIYEDVDKSELANDDNRLRAIYGIMVTAHYKNNPDDLMIMLDGIHHKIKAIRIGENSYIAACQIAEEGELSDNMVDIALKGGTFDGDLIPDRIIKHVRIKDFAKLRGWRIVRIAVAPELQDKGFGSELLKMIYEEARDKGVDWVGSSFMSDQKVLNFWIKNGFIPVHISPKKNEKLGDYPVVVIRPISDIATKIVKISAYMLKEKLLNTLHDVYFNMNPEVVRLMLTSTKIVSKTINVSPIILDKTISFLQGVSPYESSADGIHMLTLKYFWDGERDWSLTQDEELVLIAKVLQGKPWSYVSTVLSSNRTHIYELIYSAISKLMKKYYNLTADSKVGLTLKDVMNSQQYD</sequence>
<dbReference type="EC" id="2.3.1.193" evidence="1 2"/>
<dbReference type="EMBL" id="AE006641">
    <property type="protein sequence ID" value="AAK43310.1"/>
    <property type="molecule type" value="Genomic_DNA"/>
</dbReference>
<dbReference type="PIR" id="G90506">
    <property type="entry name" value="G90506"/>
</dbReference>
<dbReference type="RefSeq" id="WP_009992744.1">
    <property type="nucleotide sequence ID" value="NC_002754.1"/>
</dbReference>
<dbReference type="SMR" id="Q97U12"/>
<dbReference type="FunCoup" id="Q97U12">
    <property type="interactions" value="172"/>
</dbReference>
<dbReference type="STRING" id="273057.SSO3214"/>
<dbReference type="PaxDb" id="273057-SSO3214"/>
<dbReference type="EnsemblBacteria" id="AAK43310">
    <property type="protein sequence ID" value="AAK43310"/>
    <property type="gene ID" value="SSO3214"/>
</dbReference>
<dbReference type="KEGG" id="sso:SSO3214"/>
<dbReference type="PATRIC" id="fig|273057.12.peg.3316"/>
<dbReference type="eggNOG" id="arCOG01951">
    <property type="taxonomic scope" value="Archaea"/>
</dbReference>
<dbReference type="HOGENOM" id="CLU_004652_1_0_2"/>
<dbReference type="InParanoid" id="Q97U12"/>
<dbReference type="PhylomeDB" id="Q97U12"/>
<dbReference type="Proteomes" id="UP000001974">
    <property type="component" value="Chromosome"/>
</dbReference>
<dbReference type="GO" id="GO:0005737">
    <property type="term" value="C:cytoplasm"/>
    <property type="evidence" value="ECO:0007669"/>
    <property type="project" value="UniProtKB-SubCell"/>
</dbReference>
<dbReference type="GO" id="GO:1990883">
    <property type="term" value="F:18S rRNA cytidine N-acetyltransferase activity"/>
    <property type="evidence" value="ECO:0000318"/>
    <property type="project" value="GO_Central"/>
</dbReference>
<dbReference type="GO" id="GO:0005524">
    <property type="term" value="F:ATP binding"/>
    <property type="evidence" value="ECO:0007669"/>
    <property type="project" value="UniProtKB-UniRule"/>
</dbReference>
<dbReference type="GO" id="GO:0106162">
    <property type="term" value="F:mRNA N-acetyltransferase activity"/>
    <property type="evidence" value="ECO:0007669"/>
    <property type="project" value="RHEA"/>
</dbReference>
<dbReference type="GO" id="GO:0019843">
    <property type="term" value="F:rRNA binding"/>
    <property type="evidence" value="ECO:0007669"/>
    <property type="project" value="UniProtKB-KW"/>
</dbReference>
<dbReference type="GO" id="GO:0000049">
    <property type="term" value="F:tRNA binding"/>
    <property type="evidence" value="ECO:0000318"/>
    <property type="project" value="GO_Central"/>
</dbReference>
<dbReference type="GO" id="GO:0051392">
    <property type="term" value="F:tRNA N4-acetyltransferase activity"/>
    <property type="evidence" value="ECO:0000318"/>
    <property type="project" value="GO_Central"/>
</dbReference>
<dbReference type="GO" id="GO:1904812">
    <property type="term" value="P:rRNA acetylation involved in maturation of SSU-rRNA"/>
    <property type="evidence" value="ECO:0000318"/>
    <property type="project" value="GO_Central"/>
</dbReference>
<dbReference type="GO" id="GO:0051391">
    <property type="term" value="P:tRNA acetylation"/>
    <property type="evidence" value="ECO:0000318"/>
    <property type="project" value="GO_Central"/>
</dbReference>
<dbReference type="GO" id="GO:0002101">
    <property type="term" value="P:tRNA wobble cytosine modification"/>
    <property type="evidence" value="ECO:0000318"/>
    <property type="project" value="GO_Central"/>
</dbReference>
<dbReference type="CDD" id="cd04301">
    <property type="entry name" value="NAT_SF"/>
    <property type="match status" value="1"/>
</dbReference>
<dbReference type="FunFam" id="3.40.50.300:FF:003957">
    <property type="entry name" value="tRNA(Met) cytidine acetyltransferase TmcA"/>
    <property type="match status" value="1"/>
</dbReference>
<dbReference type="FunFam" id="3.40.630.30:FF:000140">
    <property type="entry name" value="tRNA(Met) cytidine acetyltransferase TmcA"/>
    <property type="match status" value="1"/>
</dbReference>
<dbReference type="Gene3D" id="3.40.50.11040">
    <property type="match status" value="1"/>
</dbReference>
<dbReference type="Gene3D" id="3.40.630.30">
    <property type="match status" value="1"/>
</dbReference>
<dbReference type="Gene3D" id="3.40.50.300">
    <property type="entry name" value="P-loop containing nucleotide triphosphate hydrolases"/>
    <property type="match status" value="1"/>
</dbReference>
<dbReference type="HAMAP" id="MF_01886">
    <property type="entry name" value="tRNA_acetyltr_TmcA"/>
    <property type="match status" value="1"/>
</dbReference>
<dbReference type="InterPro" id="IPR016181">
    <property type="entry name" value="Acyl_CoA_acyltransferase"/>
</dbReference>
<dbReference type="InterPro" id="IPR000182">
    <property type="entry name" value="GNAT_dom"/>
</dbReference>
<dbReference type="InterPro" id="IPR007807">
    <property type="entry name" value="NAT10/TcmA_helicase"/>
</dbReference>
<dbReference type="InterPro" id="IPR027417">
    <property type="entry name" value="P-loop_NTPase"/>
</dbReference>
<dbReference type="InterPro" id="IPR032672">
    <property type="entry name" value="TmcA/NAT10/Kre33"/>
</dbReference>
<dbReference type="InterPro" id="IPR013562">
    <property type="entry name" value="TmcA_N"/>
</dbReference>
<dbReference type="InterPro" id="IPR024914">
    <property type="entry name" value="tRNA_acetyltr_TmcA"/>
</dbReference>
<dbReference type="PANTHER" id="PTHR10925">
    <property type="entry name" value="N-ACETYLTRANSFERASE 10"/>
    <property type="match status" value="1"/>
</dbReference>
<dbReference type="PANTHER" id="PTHR10925:SF5">
    <property type="entry name" value="RNA CYTIDINE ACETYLTRANSFERASE"/>
    <property type="match status" value="1"/>
</dbReference>
<dbReference type="Pfam" id="PF13718">
    <property type="entry name" value="GNAT_acetyltr_2"/>
    <property type="match status" value="2"/>
</dbReference>
<dbReference type="Pfam" id="PF05127">
    <property type="entry name" value="NAT10_TcmA_helicase"/>
    <property type="match status" value="1"/>
</dbReference>
<dbReference type="Pfam" id="PF08351">
    <property type="entry name" value="TmcA_N"/>
    <property type="match status" value="1"/>
</dbReference>
<dbReference type="SUPFAM" id="SSF55729">
    <property type="entry name" value="Acyl-CoA N-acyltransferases (Nat)"/>
    <property type="match status" value="1"/>
</dbReference>
<dbReference type="SUPFAM" id="SSF52540">
    <property type="entry name" value="P-loop containing nucleoside triphosphate hydrolases"/>
    <property type="match status" value="1"/>
</dbReference>
<dbReference type="PROSITE" id="PS51186">
    <property type="entry name" value="GNAT"/>
    <property type="match status" value="1"/>
</dbReference>
<gene>
    <name evidence="1" type="primary">tmcA2</name>
    <name evidence="3" type="ordered locus">SSO3214</name>
</gene>
<feature type="chain" id="PRO_0000461794" description="tRNA(Met) cytidine acetyltransferase TmcA 2">
    <location>
        <begin position="1"/>
        <end position="770"/>
    </location>
</feature>
<feature type="domain" description="N-acetyltransferase" evidence="1">
    <location>
        <begin position="458"/>
        <end position="608"/>
    </location>
</feature>
<feature type="binding site" evidence="1">
    <location>
        <position position="209"/>
    </location>
    <ligand>
        <name>ATP</name>
        <dbReference type="ChEBI" id="CHEBI:30616"/>
    </ligand>
</feature>
<feature type="binding site" evidence="1">
    <location>
        <position position="390"/>
    </location>
    <ligand>
        <name>ATP</name>
        <dbReference type="ChEBI" id="CHEBI:30616"/>
    </ligand>
</feature>
<feature type="binding site" evidence="1">
    <location>
        <begin position="533"/>
        <end position="535"/>
    </location>
    <ligand>
        <name>acetyl-CoA</name>
        <dbReference type="ChEBI" id="CHEBI:57288"/>
    </ligand>
</feature>
<name>TMCA2_SACS2</name>